<evidence type="ECO:0000255" key="1"/>
<evidence type="ECO:0000255" key="2">
    <source>
        <dbReference type="PROSITE-ProRule" id="PRU00521"/>
    </source>
</evidence>
<protein>
    <recommendedName>
        <fullName>G-protein coupled receptor homolog U12</fullName>
    </recommendedName>
</protein>
<gene>
    <name type="primary">U12</name>
</gene>
<dbReference type="EMBL" id="U43400">
    <property type="protein sequence ID" value="AAC54673.1"/>
    <property type="molecule type" value="Genomic_DNA"/>
</dbReference>
<dbReference type="PIR" id="T41913">
    <property type="entry name" value="T41913"/>
</dbReference>
<dbReference type="SMR" id="P52381"/>
<dbReference type="Proteomes" id="UP000009246">
    <property type="component" value="Segment"/>
</dbReference>
<dbReference type="GO" id="GO:0020002">
    <property type="term" value="C:host cell plasma membrane"/>
    <property type="evidence" value="ECO:0007669"/>
    <property type="project" value="UniProtKB-SubCell"/>
</dbReference>
<dbReference type="GO" id="GO:0016020">
    <property type="term" value="C:membrane"/>
    <property type="evidence" value="ECO:0007669"/>
    <property type="project" value="UniProtKB-KW"/>
</dbReference>
<dbReference type="GO" id="GO:0019957">
    <property type="term" value="F:C-C chemokine binding"/>
    <property type="evidence" value="ECO:0007669"/>
    <property type="project" value="TreeGrafter"/>
</dbReference>
<dbReference type="GO" id="GO:0016493">
    <property type="term" value="F:C-C chemokine receptor activity"/>
    <property type="evidence" value="ECO:0007669"/>
    <property type="project" value="TreeGrafter"/>
</dbReference>
<dbReference type="GO" id="GO:0019722">
    <property type="term" value="P:calcium-mediated signaling"/>
    <property type="evidence" value="ECO:0007669"/>
    <property type="project" value="TreeGrafter"/>
</dbReference>
<dbReference type="GO" id="GO:0060326">
    <property type="term" value="P:cell chemotaxis"/>
    <property type="evidence" value="ECO:0007669"/>
    <property type="project" value="TreeGrafter"/>
</dbReference>
<dbReference type="GO" id="GO:0006955">
    <property type="term" value="P:immune response"/>
    <property type="evidence" value="ECO:0007669"/>
    <property type="project" value="TreeGrafter"/>
</dbReference>
<dbReference type="GO" id="GO:0007204">
    <property type="term" value="P:positive regulation of cytosolic calcium ion concentration"/>
    <property type="evidence" value="ECO:0007669"/>
    <property type="project" value="TreeGrafter"/>
</dbReference>
<dbReference type="Gene3D" id="1.20.1070.10">
    <property type="entry name" value="Rhodopsin 7-helix transmembrane proteins"/>
    <property type="match status" value="1"/>
</dbReference>
<dbReference type="InterPro" id="IPR050119">
    <property type="entry name" value="CCR1-9-like"/>
</dbReference>
<dbReference type="InterPro" id="IPR000276">
    <property type="entry name" value="GPCR_Rhodpsn"/>
</dbReference>
<dbReference type="InterPro" id="IPR017452">
    <property type="entry name" value="GPCR_Rhodpsn_7TM"/>
</dbReference>
<dbReference type="PANTHER" id="PTHR10489">
    <property type="entry name" value="CELL ADHESION MOLECULE"/>
    <property type="match status" value="1"/>
</dbReference>
<dbReference type="PANTHER" id="PTHR10489:SF932">
    <property type="entry name" value="G-PROTEIN COUPLED RECEPTORS FAMILY 1 PROFILE DOMAIN-CONTAINING PROTEIN"/>
    <property type="match status" value="1"/>
</dbReference>
<dbReference type="Pfam" id="PF00001">
    <property type="entry name" value="7tm_1"/>
    <property type="match status" value="1"/>
</dbReference>
<dbReference type="PRINTS" id="PR00237">
    <property type="entry name" value="GPCRRHODOPSN"/>
</dbReference>
<dbReference type="SUPFAM" id="SSF81321">
    <property type="entry name" value="Family A G protein-coupled receptor-like"/>
    <property type="match status" value="1"/>
</dbReference>
<dbReference type="PROSITE" id="PS50262">
    <property type="entry name" value="G_PROTEIN_RECEP_F1_2"/>
    <property type="match status" value="1"/>
</dbReference>
<comment type="subcellular location">
    <subcellularLocation>
        <location>Host cell membrane</location>
        <topology>Multi-pass membrane protein</topology>
    </subcellularLocation>
</comment>
<comment type="similarity">
    <text evidence="2">Belongs to the G-protein coupled receptor 1 family.</text>
</comment>
<organismHost>
    <name type="scientific">Homo sapiens</name>
    <name type="common">Human</name>
    <dbReference type="NCBI Taxonomy" id="9606"/>
</organismHost>
<accession>P52381</accession>
<keyword id="KW-0297">G-protein coupled receptor</keyword>
<keyword id="KW-1032">Host cell membrane</keyword>
<keyword id="KW-1043">Host membrane</keyword>
<keyword id="KW-0472">Membrane</keyword>
<keyword id="KW-0675">Receptor</keyword>
<keyword id="KW-1185">Reference proteome</keyword>
<keyword id="KW-0807">Transducer</keyword>
<keyword id="KW-0812">Transmembrane</keyword>
<keyword id="KW-1133">Transmembrane helix</keyword>
<reference key="1">
    <citation type="submission" date="1996-01" db="EMBL/GenBank/DDBJ databases">
        <authorList>
            <person name="Nicholas J."/>
        </authorList>
    </citation>
    <scope>NUCLEOTIDE SEQUENCE [GENOMIC DNA]</scope>
</reference>
<organism>
    <name type="scientific">Human herpesvirus 7 (strain JI)</name>
    <name type="common">HHV-7</name>
    <name type="synonym">Human T lymphotropic virus</name>
    <dbReference type="NCBI Taxonomy" id="57278"/>
    <lineage>
        <taxon>Viruses</taxon>
        <taxon>Duplodnaviria</taxon>
        <taxon>Heunggongvirae</taxon>
        <taxon>Peploviricota</taxon>
        <taxon>Herviviricetes</taxon>
        <taxon>Herpesvirales</taxon>
        <taxon>Orthoherpesviridae</taxon>
        <taxon>Betaherpesvirinae</taxon>
        <taxon>Roseolovirus</taxon>
        <taxon>Roseolovirus humanbeta7</taxon>
        <taxon>Human betaherpesvirus 7</taxon>
    </lineage>
</organism>
<sequence length="346" mass="39969">MICYSFAKNVTFAFLIILQNFFSQHDEEYKYNYTCITPTVRKAQRLESVINGIMLTLILPVSTVVICTLLIYYKWTKQTITSPYLITLFISDSLHSLTVLLLTLNREALTNLNQALCQCVLFVYSASCTYSLCMLAVISTIRYRTLQRRTLNDKNNNHIKRNVGILFLSSAMCAIPAVLYVQVEKKKGNYGKCNIHISTQKAYDLFIGIKIVYCFLWGIFPTVIFSYFYVIFGKTLRALTQSKHNKTLSFISLLILSFLCIQIPNLLVMSVEIFFLYIANTSCLGTIQREIVQIISRLMPEIHCLSNPLVYAFTRTDFRLRFYDFIKCNLCNSSLKRKRNPLTIKN</sequence>
<feature type="chain" id="PRO_0000070242" description="G-protein coupled receptor homolog U12">
    <location>
        <begin position="1"/>
        <end position="346"/>
    </location>
</feature>
<feature type="topological domain" description="Extracellular" evidence="1">
    <location>
        <begin position="1"/>
        <end position="31"/>
    </location>
</feature>
<feature type="transmembrane region" description="Helical; Name=1" evidence="1">
    <location>
        <begin position="32"/>
        <end position="56"/>
    </location>
</feature>
<feature type="topological domain" description="Cytoplasmic" evidence="1">
    <location>
        <begin position="57"/>
        <end position="83"/>
    </location>
</feature>
<feature type="transmembrane region" description="Helical; Name=2" evidence="1">
    <location>
        <begin position="84"/>
        <end position="108"/>
    </location>
</feature>
<feature type="topological domain" description="Extracellular" evidence="1">
    <location>
        <begin position="109"/>
        <end position="115"/>
    </location>
</feature>
<feature type="transmembrane region" description="Helical; Name=3" evidence="1">
    <location>
        <begin position="116"/>
        <end position="142"/>
    </location>
</feature>
<feature type="topological domain" description="Cytoplasmic" evidence="1">
    <location>
        <begin position="143"/>
        <end position="159"/>
    </location>
</feature>
<feature type="transmembrane region" description="Helical; Name=4" evidence="1">
    <location>
        <begin position="160"/>
        <end position="181"/>
    </location>
</feature>
<feature type="topological domain" description="Extracellular" evidence="1">
    <location>
        <begin position="182"/>
        <end position="208"/>
    </location>
</feature>
<feature type="transmembrane region" description="Helical; Name=5" evidence="1">
    <location>
        <begin position="209"/>
        <end position="229"/>
    </location>
</feature>
<feature type="topological domain" description="Cytoplasmic" evidence="1">
    <location>
        <begin position="230"/>
        <end position="245"/>
    </location>
</feature>
<feature type="transmembrane region" description="Helical; Name=6" evidence="1">
    <location>
        <begin position="246"/>
        <end position="272"/>
    </location>
</feature>
<feature type="topological domain" description="Extracellular" evidence="1">
    <location>
        <begin position="273"/>
        <end position="286"/>
    </location>
</feature>
<feature type="transmembrane region" description="Helical; Name=7" evidence="1">
    <location>
        <begin position="287"/>
        <end position="310"/>
    </location>
</feature>
<feature type="topological domain" description="Cytoplasmic" evidence="1">
    <location>
        <begin position="311"/>
        <end position="346"/>
    </location>
</feature>
<name>UL33_HHV7J</name>
<proteinExistence type="inferred from homology"/>